<proteinExistence type="evidence at protein level"/>
<reference key="1">
    <citation type="journal article" date="2007" name="BMC Genomics">
        <title>The full-ORF clone resource of the German cDNA consortium.</title>
        <authorList>
            <person name="Bechtel S."/>
            <person name="Rosenfelder H."/>
            <person name="Duda A."/>
            <person name="Schmidt C.P."/>
            <person name="Ernst U."/>
            <person name="Wellenreuther R."/>
            <person name="Mehrle A."/>
            <person name="Schuster C."/>
            <person name="Bahr A."/>
            <person name="Bloecker H."/>
            <person name="Heubner D."/>
            <person name="Hoerlein A."/>
            <person name="Michel G."/>
            <person name="Wedler H."/>
            <person name="Koehrer K."/>
            <person name="Ottenwaelder B."/>
            <person name="Poustka A."/>
            <person name="Wiemann S."/>
            <person name="Schupp I."/>
        </authorList>
    </citation>
    <scope>NUCLEOTIDE SEQUENCE [LARGE SCALE MRNA] (ISOFORM 2)</scope>
    <source>
        <tissue>Uterus</tissue>
    </source>
</reference>
<reference key="2">
    <citation type="journal article" date="2004" name="Nature">
        <title>DNA sequence and analysis of human chromosome 9.</title>
        <authorList>
            <person name="Humphray S.J."/>
            <person name="Oliver K."/>
            <person name="Hunt A.R."/>
            <person name="Plumb R.W."/>
            <person name="Loveland J.E."/>
            <person name="Howe K.L."/>
            <person name="Andrews T.D."/>
            <person name="Searle S."/>
            <person name="Hunt S.E."/>
            <person name="Scott C.E."/>
            <person name="Jones M.C."/>
            <person name="Ainscough R."/>
            <person name="Almeida J.P."/>
            <person name="Ambrose K.D."/>
            <person name="Ashwell R.I.S."/>
            <person name="Babbage A.K."/>
            <person name="Babbage S."/>
            <person name="Bagguley C.L."/>
            <person name="Bailey J."/>
            <person name="Banerjee R."/>
            <person name="Barker D.J."/>
            <person name="Barlow K.F."/>
            <person name="Bates K."/>
            <person name="Beasley H."/>
            <person name="Beasley O."/>
            <person name="Bird C.P."/>
            <person name="Bray-Allen S."/>
            <person name="Brown A.J."/>
            <person name="Brown J.Y."/>
            <person name="Burford D."/>
            <person name="Burrill W."/>
            <person name="Burton J."/>
            <person name="Carder C."/>
            <person name="Carter N.P."/>
            <person name="Chapman J.C."/>
            <person name="Chen Y."/>
            <person name="Clarke G."/>
            <person name="Clark S.Y."/>
            <person name="Clee C.M."/>
            <person name="Clegg S."/>
            <person name="Collier R.E."/>
            <person name="Corby N."/>
            <person name="Crosier M."/>
            <person name="Cummings A.T."/>
            <person name="Davies J."/>
            <person name="Dhami P."/>
            <person name="Dunn M."/>
            <person name="Dutta I."/>
            <person name="Dyer L.W."/>
            <person name="Earthrowl M.E."/>
            <person name="Faulkner L."/>
            <person name="Fleming C.J."/>
            <person name="Frankish A."/>
            <person name="Frankland J.A."/>
            <person name="French L."/>
            <person name="Fricker D.G."/>
            <person name="Garner P."/>
            <person name="Garnett J."/>
            <person name="Ghori J."/>
            <person name="Gilbert J.G.R."/>
            <person name="Glison C."/>
            <person name="Grafham D.V."/>
            <person name="Gribble S."/>
            <person name="Griffiths C."/>
            <person name="Griffiths-Jones S."/>
            <person name="Grocock R."/>
            <person name="Guy J."/>
            <person name="Hall R.E."/>
            <person name="Hammond S."/>
            <person name="Harley J.L."/>
            <person name="Harrison E.S.I."/>
            <person name="Hart E.A."/>
            <person name="Heath P.D."/>
            <person name="Henderson C.D."/>
            <person name="Hopkins B.L."/>
            <person name="Howard P.J."/>
            <person name="Howden P.J."/>
            <person name="Huckle E."/>
            <person name="Johnson C."/>
            <person name="Johnson D."/>
            <person name="Joy A.A."/>
            <person name="Kay M."/>
            <person name="Keenan S."/>
            <person name="Kershaw J.K."/>
            <person name="Kimberley A.M."/>
            <person name="King A."/>
            <person name="Knights A."/>
            <person name="Laird G.K."/>
            <person name="Langford C."/>
            <person name="Lawlor S."/>
            <person name="Leongamornlert D.A."/>
            <person name="Leversha M."/>
            <person name="Lloyd C."/>
            <person name="Lloyd D.M."/>
            <person name="Lovell J."/>
            <person name="Martin S."/>
            <person name="Mashreghi-Mohammadi M."/>
            <person name="Matthews L."/>
            <person name="McLaren S."/>
            <person name="McLay K.E."/>
            <person name="McMurray A."/>
            <person name="Milne S."/>
            <person name="Nickerson T."/>
            <person name="Nisbett J."/>
            <person name="Nordsiek G."/>
            <person name="Pearce A.V."/>
            <person name="Peck A.I."/>
            <person name="Porter K.M."/>
            <person name="Pandian R."/>
            <person name="Pelan S."/>
            <person name="Phillimore B."/>
            <person name="Povey S."/>
            <person name="Ramsey Y."/>
            <person name="Rand V."/>
            <person name="Scharfe M."/>
            <person name="Sehra H.K."/>
            <person name="Shownkeen R."/>
            <person name="Sims S.K."/>
            <person name="Skuce C.D."/>
            <person name="Smith M."/>
            <person name="Steward C.A."/>
            <person name="Swarbreck D."/>
            <person name="Sycamore N."/>
            <person name="Tester J."/>
            <person name="Thorpe A."/>
            <person name="Tracey A."/>
            <person name="Tromans A."/>
            <person name="Thomas D.W."/>
            <person name="Wall M."/>
            <person name="Wallis J.M."/>
            <person name="West A.P."/>
            <person name="Whitehead S.L."/>
            <person name="Willey D.L."/>
            <person name="Williams S.A."/>
            <person name="Wilming L."/>
            <person name="Wray P.W."/>
            <person name="Young L."/>
            <person name="Ashurst J.L."/>
            <person name="Coulson A."/>
            <person name="Blocker H."/>
            <person name="Durbin R.M."/>
            <person name="Sulston J.E."/>
            <person name="Hubbard T."/>
            <person name="Jackson M.J."/>
            <person name="Bentley D.R."/>
            <person name="Beck S."/>
            <person name="Rogers J."/>
            <person name="Dunham I."/>
        </authorList>
    </citation>
    <scope>NUCLEOTIDE SEQUENCE [LARGE SCALE GENOMIC DNA]</scope>
</reference>
<reference key="3">
    <citation type="journal article" date="2004" name="Genome Res.">
        <title>The status, quality, and expansion of the NIH full-length cDNA project: the Mammalian Gene Collection (MGC).</title>
        <authorList>
            <consortium name="The MGC Project Team"/>
        </authorList>
    </citation>
    <scope>NUCLEOTIDE SEQUENCE [LARGE SCALE MRNA] (ISOFORM 1)</scope>
    <scope>VARIANT ASN-294</scope>
    <source>
        <tissue>Duodenum</tissue>
        <tissue>Testis</tissue>
    </source>
</reference>
<gene>
    <name type="primary">MAMDC2</name>
</gene>
<accession>Q7Z304</accession>
<accession>Q5VW47</accession>
<accession>Q8WX43</accession>
<accession>Q96BM4</accession>
<name>MAMC2_HUMAN</name>
<organism>
    <name type="scientific">Homo sapiens</name>
    <name type="common">Human</name>
    <dbReference type="NCBI Taxonomy" id="9606"/>
    <lineage>
        <taxon>Eukaryota</taxon>
        <taxon>Metazoa</taxon>
        <taxon>Chordata</taxon>
        <taxon>Craniata</taxon>
        <taxon>Vertebrata</taxon>
        <taxon>Euteleostomi</taxon>
        <taxon>Mammalia</taxon>
        <taxon>Eutheria</taxon>
        <taxon>Euarchontoglires</taxon>
        <taxon>Primates</taxon>
        <taxon>Haplorrhini</taxon>
        <taxon>Catarrhini</taxon>
        <taxon>Hominidae</taxon>
        <taxon>Homo</taxon>
    </lineage>
</organism>
<sequence length="686" mass="77556">MLLRGVLLALQALQLAGALDLPAGSCAFEESTCGFDSVLASLPWILNEEGHYIYVDTSFGKQGEKAVLLSPDLQAEEWSCLRLVYQITTSSESLSDPSQLNLYMRFEDESFDRLLWSAKEPSDSWLIASLDLQNSSKKFKILIEGVLGQGNTASIALFEIKMTTGYCIECDFEENHLCGFVNRWNPNVNWFVGGGSIRNVHSILPQDHTFKSELGHYMYVDSVYVKHFQEVAQLISPLTTAPMAGCLSFYYQIQQGNDNVFSLYTRDVAGLYEEIWKADRPGNAAWNLAEVEFSAPYPMEVIFEVAFNGPKGGYVALDDISFSPVHCQNQTELLFSAVEASCNFEQDLCNFYQDKEGPGWTRVKVKPNMYRAGDHTTGLGYYLLANTKFTSQPGYIGRLYGPSLPGNLQYCLRFHYAIYGFLKMSDTLAVYIFEENHVVQEKIWSVLESPRGVWMQAEITFKKPMPTKVVFMSLCKSFWDCGLVALDDITIQLGSCSSSEKLPPPPGECTFEQDECTFTQEKRNRSSWHRRRGETPTSYTGPKGDHTTGVGYYMYIEASHMVYGQKARLLSRPLRGVSGKHCLTFFYHMYGGGTGLLSVYLKKEEDSEESLLWRRRGEQSISWLRALIEYSCERQHQIIFEAIRGVSIRSDIAIDDVKFQAGPCGEMEDTTQQSSGYSEDLNEIEY</sequence>
<feature type="signal peptide" evidence="2">
    <location>
        <begin position="1"/>
        <end position="18"/>
    </location>
</feature>
<feature type="chain" id="PRO_0000014862" description="MAM domain-containing protein 2">
    <location>
        <begin position="19"/>
        <end position="686"/>
    </location>
</feature>
<feature type="domain" description="MAM 1" evidence="3">
    <location>
        <begin position="24"/>
        <end position="169"/>
    </location>
</feature>
<feature type="domain" description="MAM 2" evidence="3">
    <location>
        <begin position="168"/>
        <end position="329"/>
    </location>
</feature>
<feature type="domain" description="MAM 3" evidence="3">
    <location>
        <begin position="340"/>
        <end position="498"/>
    </location>
</feature>
<feature type="domain" description="MAM 4" evidence="3">
    <location>
        <begin position="507"/>
        <end position="666"/>
    </location>
</feature>
<feature type="region of interest" description="Disordered" evidence="4">
    <location>
        <begin position="521"/>
        <end position="543"/>
    </location>
</feature>
<feature type="region of interest" description="Disordered" evidence="4">
    <location>
        <begin position="665"/>
        <end position="686"/>
    </location>
</feature>
<feature type="glycosylation site" description="N-linked (GlcNAc...) asparagine" evidence="2">
    <location>
        <position position="134"/>
    </location>
</feature>
<feature type="glycosylation site" description="N-linked (GlcNAc...) asparagine" evidence="2">
    <location>
        <position position="329"/>
    </location>
</feature>
<feature type="glycosylation site" description="N-linked (GlcNAc...) asparagine" evidence="2">
    <location>
        <position position="524"/>
    </location>
</feature>
<feature type="splice variant" id="VSP_009834" description="In isoform 2." evidence="6">
    <location>
        <begin position="1"/>
        <end position="553"/>
    </location>
</feature>
<feature type="sequence variant" id="VAR_028080" description="In dbSNP:rs1998972." evidence="5">
    <original>S</original>
    <variation>N</variation>
    <location>
        <position position="294"/>
    </location>
</feature>
<feature type="sequence variant" id="VAR_061318" description="In dbSNP:rs35534839.">
    <original>V</original>
    <variation>A</variation>
    <location>
        <position position="646"/>
    </location>
</feature>
<dbReference type="EMBL" id="BX538309">
    <property type="protein sequence ID" value="CAD98089.1"/>
    <property type="molecule type" value="mRNA"/>
</dbReference>
<dbReference type="EMBL" id="AL158153">
    <property type="status" value="NOT_ANNOTATED_CDS"/>
    <property type="molecule type" value="Genomic_DNA"/>
</dbReference>
<dbReference type="EMBL" id="AL392044">
    <property type="status" value="NOT_ANNOTATED_CDS"/>
    <property type="molecule type" value="Genomic_DNA"/>
</dbReference>
<dbReference type="EMBL" id="BC015417">
    <property type="protein sequence ID" value="AAH15417.1"/>
    <property type="molecule type" value="mRNA"/>
</dbReference>
<dbReference type="EMBL" id="BC016383">
    <property type="protein sequence ID" value="AAH16383.1"/>
    <property type="molecule type" value="mRNA"/>
</dbReference>
<dbReference type="EMBL" id="BC063634">
    <property type="protein sequence ID" value="AAH63634.1"/>
    <property type="molecule type" value="mRNA"/>
</dbReference>
<dbReference type="CCDS" id="CCDS6631.1">
    <molecule id="Q7Z304-1"/>
</dbReference>
<dbReference type="RefSeq" id="NP_694999.3">
    <molecule id="Q7Z304-1"/>
    <property type="nucleotide sequence ID" value="NM_153267.4"/>
</dbReference>
<dbReference type="SMR" id="Q7Z304"/>
<dbReference type="BioGRID" id="129176">
    <property type="interactions" value="13"/>
</dbReference>
<dbReference type="FunCoup" id="Q7Z304">
    <property type="interactions" value="267"/>
</dbReference>
<dbReference type="IntAct" id="Q7Z304">
    <property type="interactions" value="7"/>
</dbReference>
<dbReference type="MINT" id="Q7Z304"/>
<dbReference type="STRING" id="9606.ENSP00000366387"/>
<dbReference type="GlyCosmos" id="Q7Z304">
    <property type="glycosylation" value="3 sites, No reported glycans"/>
</dbReference>
<dbReference type="GlyGen" id="Q7Z304">
    <property type="glycosylation" value="4 sites, 1 N-linked glycan (1 site), 1 O-linked glycan (1 site)"/>
</dbReference>
<dbReference type="iPTMnet" id="Q7Z304"/>
<dbReference type="PhosphoSitePlus" id="Q7Z304"/>
<dbReference type="BioMuta" id="MAMDC2"/>
<dbReference type="DMDM" id="311033426"/>
<dbReference type="jPOST" id="Q7Z304"/>
<dbReference type="MassIVE" id="Q7Z304"/>
<dbReference type="PaxDb" id="9606-ENSP00000366387"/>
<dbReference type="PeptideAtlas" id="Q7Z304"/>
<dbReference type="ProteomicsDB" id="68993">
    <molecule id="Q7Z304-1"/>
</dbReference>
<dbReference type="ProteomicsDB" id="68994">
    <molecule id="Q7Z304-2"/>
</dbReference>
<dbReference type="Pumba" id="Q7Z304"/>
<dbReference type="Antibodypedia" id="12371">
    <property type="antibodies" value="42 antibodies from 10 providers"/>
</dbReference>
<dbReference type="DNASU" id="256691"/>
<dbReference type="Ensembl" id="ENST00000377182.5">
    <molecule id="Q7Z304-1"/>
    <property type="protein sequence ID" value="ENSP00000366387.4"/>
    <property type="gene ID" value="ENSG00000165072.10"/>
</dbReference>
<dbReference type="GeneID" id="256691"/>
<dbReference type="KEGG" id="hsa:256691"/>
<dbReference type="MANE-Select" id="ENST00000377182.5">
    <property type="protein sequence ID" value="ENSP00000366387.4"/>
    <property type="RefSeq nucleotide sequence ID" value="NM_153267.5"/>
    <property type="RefSeq protein sequence ID" value="NP_694999.3"/>
</dbReference>
<dbReference type="UCSC" id="uc004ahm.3">
    <molecule id="Q7Z304-1"/>
    <property type="organism name" value="human"/>
</dbReference>
<dbReference type="AGR" id="HGNC:23673"/>
<dbReference type="CTD" id="256691"/>
<dbReference type="DisGeNET" id="256691"/>
<dbReference type="GeneCards" id="MAMDC2"/>
<dbReference type="HGNC" id="HGNC:23673">
    <property type="gene designation" value="MAMDC2"/>
</dbReference>
<dbReference type="HPA" id="ENSG00000165072">
    <property type="expression patterns" value="Tissue enhanced (endometrium)"/>
</dbReference>
<dbReference type="MalaCards" id="MAMDC2"/>
<dbReference type="MIM" id="612879">
    <property type="type" value="gene"/>
</dbReference>
<dbReference type="neXtProt" id="NX_Q7Z304"/>
<dbReference type="OpenTargets" id="ENSG00000165072"/>
<dbReference type="PharmGKB" id="PA134944739"/>
<dbReference type="VEuPathDB" id="HostDB:ENSG00000165072"/>
<dbReference type="eggNOG" id="ENOG502QVDI">
    <property type="taxonomic scope" value="Eukaryota"/>
</dbReference>
<dbReference type="GeneTree" id="ENSGT00940000156117"/>
<dbReference type="HOGENOM" id="CLU_015093_0_0_1"/>
<dbReference type="InParanoid" id="Q7Z304"/>
<dbReference type="OMA" id="YEEIWKI"/>
<dbReference type="OrthoDB" id="10020495at2759"/>
<dbReference type="PAN-GO" id="Q7Z304">
    <property type="GO annotations" value="0 GO annotations based on evolutionary models"/>
</dbReference>
<dbReference type="PhylomeDB" id="Q7Z304"/>
<dbReference type="TreeFam" id="TF330345"/>
<dbReference type="PathwayCommons" id="Q7Z304"/>
<dbReference type="SignaLink" id="Q7Z304"/>
<dbReference type="BioGRID-ORCS" id="256691">
    <property type="hits" value="9 hits in 1143 CRISPR screens"/>
</dbReference>
<dbReference type="ChiTaRS" id="MAMDC2">
    <property type="organism name" value="human"/>
</dbReference>
<dbReference type="GenomeRNAi" id="256691"/>
<dbReference type="Pharos" id="Q7Z304">
    <property type="development level" value="Tdark"/>
</dbReference>
<dbReference type="PRO" id="PR:Q7Z304"/>
<dbReference type="Proteomes" id="UP000005640">
    <property type="component" value="Chromosome 9"/>
</dbReference>
<dbReference type="RNAct" id="Q7Z304">
    <property type="molecule type" value="protein"/>
</dbReference>
<dbReference type="Bgee" id="ENSG00000165072">
    <property type="expression patterns" value="Expressed in mucosa of stomach and 159 other cell types or tissues"/>
</dbReference>
<dbReference type="GO" id="GO:0005783">
    <property type="term" value="C:endoplasmic reticulum"/>
    <property type="evidence" value="ECO:0000314"/>
    <property type="project" value="LIFEdb"/>
</dbReference>
<dbReference type="GO" id="GO:0005576">
    <property type="term" value="C:extracellular region"/>
    <property type="evidence" value="ECO:0007669"/>
    <property type="project" value="UniProtKB-KW"/>
</dbReference>
<dbReference type="GO" id="GO:0016020">
    <property type="term" value="C:membrane"/>
    <property type="evidence" value="ECO:0007669"/>
    <property type="project" value="InterPro"/>
</dbReference>
<dbReference type="CDD" id="cd06263">
    <property type="entry name" value="MAM"/>
    <property type="match status" value="4"/>
</dbReference>
<dbReference type="FunFam" id="2.60.120.200:FF:000174">
    <property type="entry name" value="MAM domain containing 2"/>
    <property type="match status" value="1"/>
</dbReference>
<dbReference type="FunFam" id="2.60.120.200:FF:000189">
    <property type="entry name" value="MAM domain containing 2"/>
    <property type="match status" value="1"/>
</dbReference>
<dbReference type="FunFam" id="2.60.120.200:FF:000142">
    <property type="entry name" value="MAM domain-containing protein 2"/>
    <property type="match status" value="1"/>
</dbReference>
<dbReference type="FunFam" id="2.60.120.200:FF:000229">
    <property type="entry name" value="MAM domain-containing protein 2"/>
    <property type="match status" value="1"/>
</dbReference>
<dbReference type="Gene3D" id="2.60.120.200">
    <property type="match status" value="4"/>
</dbReference>
<dbReference type="InterPro" id="IPR013320">
    <property type="entry name" value="ConA-like_dom_sf"/>
</dbReference>
<dbReference type="InterPro" id="IPR000998">
    <property type="entry name" value="MAM_dom"/>
</dbReference>
<dbReference type="InterPro" id="IPR051560">
    <property type="entry name" value="MAM_domain-containing"/>
</dbReference>
<dbReference type="PANTHER" id="PTHR23282">
    <property type="entry name" value="APICAL ENDOSOMAL GLYCOPROTEIN PRECURSOR"/>
    <property type="match status" value="1"/>
</dbReference>
<dbReference type="PANTHER" id="PTHR23282:SF101">
    <property type="entry name" value="MAM DOMAIN-CONTAINING PROTEIN"/>
    <property type="match status" value="1"/>
</dbReference>
<dbReference type="Pfam" id="PF00629">
    <property type="entry name" value="MAM"/>
    <property type="match status" value="4"/>
</dbReference>
<dbReference type="PRINTS" id="PR00020">
    <property type="entry name" value="MAMDOMAIN"/>
</dbReference>
<dbReference type="SMART" id="SM00137">
    <property type="entry name" value="MAM"/>
    <property type="match status" value="4"/>
</dbReference>
<dbReference type="SUPFAM" id="SSF49899">
    <property type="entry name" value="Concanavalin A-like lectins/glucanases"/>
    <property type="match status" value="4"/>
</dbReference>
<dbReference type="PROSITE" id="PS00740">
    <property type="entry name" value="MAM_1"/>
    <property type="match status" value="2"/>
</dbReference>
<dbReference type="PROSITE" id="PS50060">
    <property type="entry name" value="MAM_2"/>
    <property type="match status" value="4"/>
</dbReference>
<protein>
    <recommendedName>
        <fullName>MAM domain-containing protein 2</fullName>
    </recommendedName>
    <alternativeName>
        <fullName>MAM domain-containing proteoglycan</fullName>
        <shortName>Mamcan</shortName>
    </alternativeName>
</protein>
<comment type="interaction">
    <interactant intactId="EBI-8456413">
        <id>Q7Z304</id>
    </interactant>
    <interactant intactId="EBI-743105">
        <id>Q5JVL4</id>
        <label>EFHC1</label>
    </interactant>
    <organismsDiffer>false</organismsDiffer>
    <experiments>3</experiments>
</comment>
<comment type="subcellular location">
    <subcellularLocation>
        <location evidence="1">Secreted</location>
        <location evidence="1">Extracellular space</location>
        <location evidence="1">Extracellular matrix</location>
    </subcellularLocation>
</comment>
<comment type="alternative products">
    <event type="alternative splicing"/>
    <isoform>
        <id>Q7Z304-1</id>
        <name>1</name>
        <sequence type="displayed"/>
    </isoform>
    <isoform>
        <id>Q7Z304-2</id>
        <name>2</name>
        <sequence type="described" ref="VSP_009834"/>
    </isoform>
</comment>
<comment type="PTM">
    <text evidence="1">O-glycosylated.</text>
</comment>
<evidence type="ECO:0000250" key="1"/>
<evidence type="ECO:0000255" key="2"/>
<evidence type="ECO:0000255" key="3">
    <source>
        <dbReference type="PROSITE-ProRule" id="PRU00128"/>
    </source>
</evidence>
<evidence type="ECO:0000256" key="4">
    <source>
        <dbReference type="SAM" id="MobiDB-lite"/>
    </source>
</evidence>
<evidence type="ECO:0000269" key="5">
    <source>
    </source>
</evidence>
<evidence type="ECO:0000303" key="6">
    <source>
    </source>
</evidence>
<keyword id="KW-0025">Alternative splicing</keyword>
<keyword id="KW-0272">Extracellular matrix</keyword>
<keyword id="KW-0325">Glycoprotein</keyword>
<keyword id="KW-1267">Proteomics identification</keyword>
<keyword id="KW-1185">Reference proteome</keyword>
<keyword id="KW-0677">Repeat</keyword>
<keyword id="KW-0964">Secreted</keyword>
<keyword id="KW-0732">Signal</keyword>